<protein>
    <recommendedName>
        <fullName evidence="4">Immune-associated nucleotide-binding protein 9</fullName>
        <shortName evidence="4">AtIAN9</shortName>
    </recommendedName>
    <alternativeName>
        <fullName evidence="5">AIG1-like protein</fullName>
    </alternativeName>
</protein>
<name>IAN9_ARATH</name>
<organism evidence="11">
    <name type="scientific">Arabidopsis thaliana</name>
    <name type="common">Mouse-ear cress</name>
    <dbReference type="NCBI Taxonomy" id="3702"/>
    <lineage>
        <taxon>Eukaryota</taxon>
        <taxon>Viridiplantae</taxon>
        <taxon>Streptophyta</taxon>
        <taxon>Embryophyta</taxon>
        <taxon>Tracheophyta</taxon>
        <taxon>Spermatophyta</taxon>
        <taxon>Magnoliopsida</taxon>
        <taxon>eudicotyledons</taxon>
        <taxon>Gunneridae</taxon>
        <taxon>Pentapetalae</taxon>
        <taxon>rosids</taxon>
        <taxon>malvids</taxon>
        <taxon>Brassicales</taxon>
        <taxon>Brassicaceae</taxon>
        <taxon>Camelineae</taxon>
        <taxon>Arabidopsis</taxon>
    </lineage>
</organism>
<keyword id="KW-0025">Alternative splicing</keyword>
<keyword id="KW-0175">Coiled coil</keyword>
<keyword id="KW-0342">GTP-binding</keyword>
<keyword id="KW-0547">Nucleotide-binding</keyword>
<keyword id="KW-1185">Reference proteome</keyword>
<sequence length="342" mass="38815">MSLLDMGGDMMEDDWEFASSSNPKRTLVLVGRTGNGKSATGNSILGRKAFRSRARTVGVTSTCESQRVVQEDGDIINVVDTPGLFDLSTAADFIGKEIVRCISLAEDGIHAILLVFSVRRLAEEEQTVLSFLQALFGSKIADYMIVVFTGGDELEENEETLEEYLADYCPEFLKEILGICDNRLVLFNNKTTDKVKKAEQVQKLLSLVESVVKQNNGKPYSDELFHELQEEAIKLRDQKKEVELLQGYSNNEIDEFKKQIDMSYDRQLSRITEMVETKLRDTAKRLEQQLGEEQAARLEAEKRANEVQKRSSDEIKKLRENLERAEKETKELQKKLGKCINL</sequence>
<comment type="alternative products">
    <event type="alternative splicing"/>
    <isoform>
        <id>F4HT21-1</id>
        <name>1</name>
        <sequence type="displayed"/>
    </isoform>
    <isoform>
        <id>F4HT21-2</id>
        <name>2</name>
        <sequence type="described" ref="VSP_058602 VSP_058603"/>
    </isoform>
</comment>
<comment type="tissue specificity">
    <text evidence="6">Mainly expressed in leaves.</text>
</comment>
<comment type="induction">
    <text evidence="6">Up-regulated by brassinolides. Down-regulated by 2-aminoethoxyvinylglycine (AVG), high CO(2), isoxaben, and propiconazole treatments.</text>
</comment>
<comment type="similarity">
    <text evidence="5">Belongs to the TRAFAC class TrmE-Era-EngA-EngB-Septin-like GTPase superfamily. AIG1/Toc34/Toc159-like paraseptin GTPase family. IAN subfamily.</text>
</comment>
<comment type="sequence caution" evidence="5">
    <conflict type="erroneous initiation">
        <sequence resource="EMBL-CDS" id="AAG12538"/>
    </conflict>
    <text>Truncated N-terminus.</text>
</comment>
<comment type="sequence caution" evidence="5">
    <conflict type="erroneous initiation">
        <sequence resource="EMBL-CDS" id="AAG12846"/>
    </conflict>
    <text>Truncated N-terminus.</text>
</comment>
<comment type="sequence caution" evidence="5">
    <conflict type="erroneous initiation">
        <sequence resource="EMBL-CDS" id="AAM65167"/>
    </conflict>
    <text>Truncated N-terminus.</text>
</comment>
<comment type="sequence caution" evidence="5">
    <conflict type="erroneous initiation">
        <sequence resource="EMBL-CDS" id="AAN60299"/>
    </conflict>
    <text>Truncated N-terminus.</text>
</comment>
<accession>F4HT21</accession>
<accession>F4HT25</accession>
<accession>Q8H7C8</accession>
<accession>Q9C8V3</accession>
<accession>Q9FE56</accession>
<gene>
    <name evidence="4" type="primary">IAN9</name>
    <name evidence="7" type="ordered locus">At1g33970</name>
    <name evidence="8" type="ORF">F12G12.21</name>
    <name evidence="9" type="ORF">T15K4.2</name>
    <name evidence="10" type="ORF">T3M13.1</name>
</gene>
<reference key="1">
    <citation type="journal article" date="2000" name="Nature">
        <title>Sequence and analysis of chromosome 1 of the plant Arabidopsis thaliana.</title>
        <authorList>
            <person name="Theologis A."/>
            <person name="Ecker J.R."/>
            <person name="Palm C.J."/>
            <person name="Federspiel N.A."/>
            <person name="Kaul S."/>
            <person name="White O."/>
            <person name="Alonso J."/>
            <person name="Altafi H."/>
            <person name="Araujo R."/>
            <person name="Bowman C.L."/>
            <person name="Brooks S.Y."/>
            <person name="Buehler E."/>
            <person name="Chan A."/>
            <person name="Chao Q."/>
            <person name="Chen H."/>
            <person name="Cheuk R.F."/>
            <person name="Chin C.W."/>
            <person name="Chung M.K."/>
            <person name="Conn L."/>
            <person name="Conway A.B."/>
            <person name="Conway A.R."/>
            <person name="Creasy T.H."/>
            <person name="Dewar K."/>
            <person name="Dunn P."/>
            <person name="Etgu P."/>
            <person name="Feldblyum T.V."/>
            <person name="Feng J.-D."/>
            <person name="Fong B."/>
            <person name="Fujii C.Y."/>
            <person name="Gill J.E."/>
            <person name="Goldsmith A.D."/>
            <person name="Haas B."/>
            <person name="Hansen N.F."/>
            <person name="Hughes B."/>
            <person name="Huizar L."/>
            <person name="Hunter J.L."/>
            <person name="Jenkins J."/>
            <person name="Johnson-Hopson C."/>
            <person name="Khan S."/>
            <person name="Khaykin E."/>
            <person name="Kim C.J."/>
            <person name="Koo H.L."/>
            <person name="Kremenetskaia I."/>
            <person name="Kurtz D.B."/>
            <person name="Kwan A."/>
            <person name="Lam B."/>
            <person name="Langin-Hooper S."/>
            <person name="Lee A."/>
            <person name="Lee J.M."/>
            <person name="Lenz C.A."/>
            <person name="Li J.H."/>
            <person name="Li Y.-P."/>
            <person name="Lin X."/>
            <person name="Liu S.X."/>
            <person name="Liu Z.A."/>
            <person name="Luros J.S."/>
            <person name="Maiti R."/>
            <person name="Marziali A."/>
            <person name="Militscher J."/>
            <person name="Miranda M."/>
            <person name="Nguyen M."/>
            <person name="Nierman W.C."/>
            <person name="Osborne B.I."/>
            <person name="Pai G."/>
            <person name="Peterson J."/>
            <person name="Pham P.K."/>
            <person name="Rizzo M."/>
            <person name="Rooney T."/>
            <person name="Rowley D."/>
            <person name="Sakano H."/>
            <person name="Salzberg S.L."/>
            <person name="Schwartz J.R."/>
            <person name="Shinn P."/>
            <person name="Southwick A.M."/>
            <person name="Sun H."/>
            <person name="Tallon L.J."/>
            <person name="Tambunga G."/>
            <person name="Toriumi M.J."/>
            <person name="Town C.D."/>
            <person name="Utterback T."/>
            <person name="Van Aken S."/>
            <person name="Vaysberg M."/>
            <person name="Vysotskaia V.S."/>
            <person name="Walker M."/>
            <person name="Wu D."/>
            <person name="Yu G."/>
            <person name="Fraser C.M."/>
            <person name="Venter J.C."/>
            <person name="Davis R.W."/>
        </authorList>
    </citation>
    <scope>NUCLEOTIDE SEQUENCE [LARGE SCALE GENOMIC DNA]</scope>
    <source>
        <strain>cv. Columbia</strain>
    </source>
</reference>
<reference key="2">
    <citation type="journal article" date="2017" name="Plant J.">
        <title>Araport11: a complete reannotation of the Arabidopsis thaliana reference genome.</title>
        <authorList>
            <person name="Cheng C.Y."/>
            <person name="Krishnakumar V."/>
            <person name="Chan A.P."/>
            <person name="Thibaud-Nissen F."/>
            <person name="Schobel S."/>
            <person name="Town C.D."/>
        </authorList>
    </citation>
    <scope>GENOME REANNOTATION</scope>
    <source>
        <strain>cv. Columbia</strain>
    </source>
</reference>
<reference key="3">
    <citation type="submission" date="1998-08" db="EMBL/GenBank/DDBJ databases">
        <title>Signal peptide selection derived cDNAs from Arabidopsis thaliana leaves and guard cells.</title>
        <authorList>
            <person name="Stracke R."/>
            <person name="Palme K."/>
        </authorList>
    </citation>
    <scope>NUCLEOTIDE SEQUENCE [MRNA] (ISOFORM 1)</scope>
</reference>
<reference key="4">
    <citation type="submission" date="2002-03" db="EMBL/GenBank/DDBJ databases">
        <title>Full-length cDNA from Arabidopsis thaliana.</title>
        <authorList>
            <person name="Brover V.V."/>
            <person name="Troukhan M.E."/>
            <person name="Alexandrov N.A."/>
            <person name="Lu Y.-P."/>
            <person name="Flavell R.B."/>
            <person name="Feldmann K.A."/>
        </authorList>
    </citation>
    <scope>NUCLEOTIDE SEQUENCE [LARGE SCALE MRNA] (ISOFORM 1)</scope>
</reference>
<reference key="5">
    <citation type="journal article" date="2008" name="J. Plant Physiol.">
        <title>Computational identification and analysis of immune-associated nucleotide gene family in Arabidopsis thaliana.</title>
        <authorList>
            <person name="Liu C."/>
            <person name="Wang T."/>
            <person name="Zhang W."/>
            <person name="Li X."/>
        </authorList>
    </citation>
    <scope>GENE FAMILY</scope>
    <scope>NOMENCLATURE</scope>
</reference>
<proteinExistence type="evidence at transcript level"/>
<evidence type="ECO:0000250" key="1">
    <source>
        <dbReference type="UniProtKB" id="Q8NHV1"/>
    </source>
</evidence>
<evidence type="ECO:0000255" key="2"/>
<evidence type="ECO:0000255" key="3">
    <source>
        <dbReference type="PROSITE-ProRule" id="PRU01057"/>
    </source>
</evidence>
<evidence type="ECO:0000303" key="4">
    <source>
    </source>
</evidence>
<evidence type="ECO:0000305" key="5"/>
<evidence type="ECO:0000305" key="6">
    <source>
    </source>
</evidence>
<evidence type="ECO:0000312" key="7">
    <source>
        <dbReference type="Araport" id="AT1G33970"/>
    </source>
</evidence>
<evidence type="ECO:0000312" key="8">
    <source>
        <dbReference type="EMBL" id="AAG12538.1"/>
    </source>
</evidence>
<evidence type="ECO:0000312" key="9">
    <source>
        <dbReference type="EMBL" id="AAG12846.1"/>
    </source>
</evidence>
<evidence type="ECO:0000312" key="10">
    <source>
        <dbReference type="EMBL" id="AAG52214.1"/>
    </source>
</evidence>
<evidence type="ECO:0000312" key="11">
    <source>
        <dbReference type="Proteomes" id="UP000006548"/>
    </source>
</evidence>
<feature type="chain" id="PRO_0000438032" description="Immune-associated nucleotide-binding protein 9">
    <location>
        <begin position="1"/>
        <end position="342"/>
    </location>
</feature>
<feature type="domain" description="AIG1-type G" evidence="3">
    <location>
        <begin position="22"/>
        <end position="229"/>
    </location>
</feature>
<feature type="region of interest" description="G1" evidence="3">
    <location>
        <begin position="31"/>
        <end position="38"/>
    </location>
</feature>
<feature type="region of interest" description="G2" evidence="3">
    <location>
        <begin position="58"/>
        <end position="62"/>
    </location>
</feature>
<feature type="region of interest" description="G3" evidence="3">
    <location>
        <begin position="80"/>
        <end position="83"/>
    </location>
</feature>
<feature type="region of interest" description="G4" evidence="3">
    <location>
        <begin position="149"/>
        <end position="152"/>
    </location>
</feature>
<feature type="region of interest" description="G5" evidence="3">
    <location>
        <begin position="188"/>
        <end position="190"/>
    </location>
</feature>
<feature type="coiled-coil region" evidence="2">
    <location>
        <begin position="276"/>
        <end position="342"/>
    </location>
</feature>
<feature type="binding site" evidence="1">
    <location>
        <begin position="31"/>
        <end position="39"/>
    </location>
    <ligand>
        <name>GTP</name>
        <dbReference type="ChEBI" id="CHEBI:37565"/>
    </ligand>
</feature>
<feature type="binding site" evidence="1">
    <location>
        <position position="52"/>
    </location>
    <ligand>
        <name>GTP</name>
        <dbReference type="ChEBI" id="CHEBI:37565"/>
    </ligand>
</feature>
<feature type="binding site" evidence="1">
    <location>
        <position position="189"/>
    </location>
    <ligand>
        <name>GTP</name>
        <dbReference type="ChEBI" id="CHEBI:37565"/>
    </ligand>
</feature>
<feature type="splice variant" id="VSP_058602" description="In isoform 2.">
    <original>E</original>
    <variation>I</variation>
    <location>
        <position position="276"/>
    </location>
</feature>
<feature type="splice variant" id="VSP_058603" description="In isoform 2.">
    <location>
        <begin position="277"/>
        <end position="342"/>
    </location>
</feature>
<feature type="sequence conflict" description="In Ref. 3; AAN60299." evidence="5" ref="3">
    <original>Q</original>
    <variation>H</variation>
    <location>
        <position position="214"/>
    </location>
</feature>
<dbReference type="EMBL" id="AC015446">
    <property type="protein sequence ID" value="AAG12538.1"/>
    <property type="status" value="ALT_INIT"/>
    <property type="molecule type" value="Genomic_DNA"/>
</dbReference>
<dbReference type="EMBL" id="AC022288">
    <property type="protein sequence ID" value="AAG52214.1"/>
    <property type="molecule type" value="Genomic_DNA"/>
</dbReference>
<dbReference type="EMBL" id="AC079286">
    <property type="protein sequence ID" value="AAG12846.1"/>
    <property type="status" value="ALT_INIT"/>
    <property type="molecule type" value="Genomic_DNA"/>
</dbReference>
<dbReference type="EMBL" id="CP002684">
    <property type="protein sequence ID" value="AEE31648.1"/>
    <property type="molecule type" value="Genomic_DNA"/>
</dbReference>
<dbReference type="EMBL" id="CP002684">
    <property type="protein sequence ID" value="AEE31649.1"/>
    <property type="molecule type" value="Genomic_DNA"/>
</dbReference>
<dbReference type="EMBL" id="CP002684">
    <property type="protein sequence ID" value="AEE31650.1"/>
    <property type="molecule type" value="Genomic_DNA"/>
</dbReference>
<dbReference type="EMBL" id="CP002684">
    <property type="protein sequence ID" value="AEE31651.1"/>
    <property type="molecule type" value="Genomic_DNA"/>
</dbReference>
<dbReference type="EMBL" id="CP002684">
    <property type="protein sequence ID" value="AEE31652.1"/>
    <property type="molecule type" value="Genomic_DNA"/>
</dbReference>
<dbReference type="EMBL" id="AF083741">
    <property type="protein sequence ID" value="AAN60299.1"/>
    <property type="status" value="ALT_INIT"/>
    <property type="molecule type" value="mRNA"/>
</dbReference>
<dbReference type="EMBL" id="AY087627">
    <property type="protein sequence ID" value="AAM65167.1"/>
    <property type="status" value="ALT_INIT"/>
    <property type="molecule type" value="mRNA"/>
</dbReference>
<dbReference type="PIR" id="D86463">
    <property type="entry name" value="D86463"/>
</dbReference>
<dbReference type="RefSeq" id="NP_001031136.1">
    <molecule id="F4HT21-1"/>
    <property type="nucleotide sequence ID" value="NM_001036059.2"/>
</dbReference>
<dbReference type="RefSeq" id="NP_001031137.1">
    <molecule id="F4HT21-2"/>
    <property type="nucleotide sequence ID" value="NM_001036060.3"/>
</dbReference>
<dbReference type="RefSeq" id="NP_001077647.1">
    <molecule id="F4HT21-1"/>
    <property type="nucleotide sequence ID" value="NM_001084178.2"/>
</dbReference>
<dbReference type="RefSeq" id="NP_001185134.1">
    <molecule id="F4HT21-1"/>
    <property type="nucleotide sequence ID" value="NM_001198205.2"/>
</dbReference>
<dbReference type="RefSeq" id="NP_564431.1">
    <molecule id="F4HT21-1"/>
    <property type="nucleotide sequence ID" value="NM_103119.5"/>
</dbReference>
<dbReference type="SMR" id="F4HT21"/>
<dbReference type="FunCoup" id="F4HT21">
    <property type="interactions" value="95"/>
</dbReference>
<dbReference type="STRING" id="3702.F4HT21"/>
<dbReference type="PaxDb" id="3702-AT1G33970.2"/>
<dbReference type="ProteomicsDB" id="232143">
    <molecule id="F4HT21-1"/>
</dbReference>
<dbReference type="EnsemblPlants" id="AT1G33970.1">
    <molecule id="F4HT21-1"/>
    <property type="protein sequence ID" value="AT1G33970.1"/>
    <property type="gene ID" value="AT1G33970"/>
</dbReference>
<dbReference type="EnsemblPlants" id="AT1G33970.2">
    <molecule id="F4HT21-1"/>
    <property type="protein sequence ID" value="AT1G33970.2"/>
    <property type="gene ID" value="AT1G33970"/>
</dbReference>
<dbReference type="EnsemblPlants" id="AT1G33970.3">
    <molecule id="F4HT21-2"/>
    <property type="protein sequence ID" value="AT1G33970.3"/>
    <property type="gene ID" value="AT1G33970"/>
</dbReference>
<dbReference type="EnsemblPlants" id="AT1G33970.4">
    <molecule id="F4HT21-1"/>
    <property type="protein sequence ID" value="AT1G33970.4"/>
    <property type="gene ID" value="AT1G33970"/>
</dbReference>
<dbReference type="EnsemblPlants" id="AT1G33970.5">
    <molecule id="F4HT21-1"/>
    <property type="protein sequence ID" value="AT1G33970.5"/>
    <property type="gene ID" value="AT1G33970"/>
</dbReference>
<dbReference type="GeneID" id="840294"/>
<dbReference type="Gramene" id="AT1G33970.1">
    <molecule id="F4HT21-1"/>
    <property type="protein sequence ID" value="AT1G33970.1"/>
    <property type="gene ID" value="AT1G33970"/>
</dbReference>
<dbReference type="Gramene" id="AT1G33970.2">
    <molecule id="F4HT21-1"/>
    <property type="protein sequence ID" value="AT1G33970.2"/>
    <property type="gene ID" value="AT1G33970"/>
</dbReference>
<dbReference type="Gramene" id="AT1G33970.3">
    <molecule id="F4HT21-2"/>
    <property type="protein sequence ID" value="AT1G33970.3"/>
    <property type="gene ID" value="AT1G33970"/>
</dbReference>
<dbReference type="Gramene" id="AT1G33970.4">
    <molecule id="F4HT21-1"/>
    <property type="protein sequence ID" value="AT1G33970.4"/>
    <property type="gene ID" value="AT1G33970"/>
</dbReference>
<dbReference type="Gramene" id="AT1G33970.5">
    <molecule id="F4HT21-1"/>
    <property type="protein sequence ID" value="AT1G33970.5"/>
    <property type="gene ID" value="AT1G33970"/>
</dbReference>
<dbReference type="KEGG" id="ath:AT1G33970"/>
<dbReference type="Araport" id="AT1G33970"/>
<dbReference type="TAIR" id="AT1G33970">
    <property type="gene designation" value="IAN9"/>
</dbReference>
<dbReference type="eggNOG" id="ENOG502R7PE">
    <property type="taxonomic scope" value="Eukaryota"/>
</dbReference>
<dbReference type="HOGENOM" id="CLU_010468_0_1_1"/>
<dbReference type="InParanoid" id="F4HT21"/>
<dbReference type="OMA" id="PITATCE"/>
<dbReference type="OrthoDB" id="8954335at2759"/>
<dbReference type="PRO" id="PR:F4HT21"/>
<dbReference type="Proteomes" id="UP000006548">
    <property type="component" value="Chromosome 1"/>
</dbReference>
<dbReference type="ExpressionAtlas" id="F4HT21">
    <property type="expression patterns" value="baseline and differential"/>
</dbReference>
<dbReference type="GO" id="GO:0005525">
    <property type="term" value="F:GTP binding"/>
    <property type="evidence" value="ECO:0007669"/>
    <property type="project" value="UniProtKB-KW"/>
</dbReference>
<dbReference type="GO" id="GO:1900425">
    <property type="term" value="P:negative regulation of defense response to bacterium"/>
    <property type="evidence" value="ECO:0000315"/>
    <property type="project" value="TAIR"/>
</dbReference>
<dbReference type="CDD" id="cd01852">
    <property type="entry name" value="AIG1"/>
    <property type="match status" value="1"/>
</dbReference>
<dbReference type="FunFam" id="3.40.50.300:FF:000840">
    <property type="entry name" value="Immune-associated nucleotide-binding protein 9"/>
    <property type="match status" value="1"/>
</dbReference>
<dbReference type="Gene3D" id="3.40.50.300">
    <property type="entry name" value="P-loop containing nucleotide triphosphate hydrolases"/>
    <property type="match status" value="1"/>
</dbReference>
<dbReference type="InterPro" id="IPR006703">
    <property type="entry name" value="G_AIG1"/>
</dbReference>
<dbReference type="InterPro" id="IPR045058">
    <property type="entry name" value="GIMA/IAN/Toc"/>
</dbReference>
<dbReference type="InterPro" id="IPR027417">
    <property type="entry name" value="P-loop_NTPase"/>
</dbReference>
<dbReference type="PANTHER" id="PTHR10903:SF184">
    <property type="entry name" value="GTP-BINDING PROTEIN A"/>
    <property type="match status" value="1"/>
</dbReference>
<dbReference type="PANTHER" id="PTHR10903">
    <property type="entry name" value="GTPASE, IMAP FAMILY MEMBER-RELATED"/>
    <property type="match status" value="1"/>
</dbReference>
<dbReference type="Pfam" id="PF04548">
    <property type="entry name" value="AIG1"/>
    <property type="match status" value="1"/>
</dbReference>
<dbReference type="SUPFAM" id="SSF52540">
    <property type="entry name" value="P-loop containing nucleoside triphosphate hydrolases"/>
    <property type="match status" value="1"/>
</dbReference>
<dbReference type="PROSITE" id="PS51720">
    <property type="entry name" value="G_AIG1"/>
    <property type="match status" value="1"/>
</dbReference>